<protein>
    <recommendedName>
        <fullName>Zinc finger protein 879</fullName>
    </recommendedName>
</protein>
<gene>
    <name type="primary">Znf879</name>
    <name type="synonym">Zfp879</name>
</gene>
<proteinExistence type="evidence at transcript level"/>
<keyword id="KW-0238">DNA-binding</keyword>
<keyword id="KW-0479">Metal-binding</keyword>
<keyword id="KW-0539">Nucleus</keyword>
<keyword id="KW-1185">Reference proteome</keyword>
<keyword id="KW-0677">Repeat</keyword>
<keyword id="KW-0804">Transcription</keyword>
<keyword id="KW-0805">Transcription regulation</keyword>
<keyword id="KW-0862">Zinc</keyword>
<keyword id="KW-0863">Zinc-finger</keyword>
<sequence>MTTRLLPAQVQEPVTFRDVAVSFSQDEWLHLDPAQRTLYREVMLENYSNLVSLGILFSKPKVIAQLEQAEDFPMVESGMFQGVYLGWKSLFEPIVSKEENKKVLKNQRVDKFFNFILGKTCVNEEQLEEQPGNKKNPFSEMLLSVRRGCRQERGFPGVGLVRNPGIKLPFRRKPGVAAGGGKPHLQQYSVLFKQLGFNRARQLCKCNICGKVFFHSSSLSKHQRTHTGEKLYKCQGCRKAFSQRSSLAQHLRVHTGEKPYLCSDCGKAFSFTTSLIGHQRMHTGERPYECKECGKTFKGSSSLHNHQRIHTGEKPYKCNECGRAFSQCSSLIQHHRIHTGEKPYECSQCGKAFTSISRLSRHHRVHTGEKPFHCNVCGKVFSYHSALTIHQRTHTGEKPYACKECGKAFSQSSALTQHQRIHTGEKPYKCAECGKAFSWLSRLNIHHRIHTGEKPYHCKECGKAFSSHSAVNTHRKIHTGEKPYKCSDCEKAFNQSSALIQHQRIHTGEKPFNCKVCGKAFRQSSSLMTHMRIHTGERPYRCEACGKAFSQSSSLANHQKTHY</sequence>
<dbReference type="EMBL" id="AK036152">
    <property type="protein sequence ID" value="BAC29322.1"/>
    <property type="molecule type" value="mRNA"/>
</dbReference>
<dbReference type="EMBL" id="AL627215">
    <property type="status" value="NOT_ANNOTATED_CDS"/>
    <property type="molecule type" value="Genomic_DNA"/>
</dbReference>
<dbReference type="EMBL" id="CH466575">
    <property type="protein sequence ID" value="EDL33691.1"/>
    <property type="molecule type" value="Genomic_DNA"/>
</dbReference>
<dbReference type="CCDS" id="CCDS24638.1"/>
<dbReference type="RefSeq" id="NP_001277708.1">
    <property type="nucleotide sequence ID" value="NM_001290779.1"/>
</dbReference>
<dbReference type="RefSeq" id="NP_775563.1">
    <property type="nucleotide sequence ID" value="NM_173387.3"/>
</dbReference>
<dbReference type="SMR" id="Q8BI99"/>
<dbReference type="STRING" id="10090.ENSMUSP00000104762"/>
<dbReference type="GlyGen" id="Q8BI99">
    <property type="glycosylation" value="1 site, 1 O-linked glycan (1 site)"/>
</dbReference>
<dbReference type="iPTMnet" id="Q8BI99"/>
<dbReference type="PhosphoSitePlus" id="Q8BI99"/>
<dbReference type="PaxDb" id="10090-ENSMUSP00000104762"/>
<dbReference type="ProteomicsDB" id="275038"/>
<dbReference type="Antibodypedia" id="29464">
    <property type="antibodies" value="36 antibodies from 10 providers"/>
</dbReference>
<dbReference type="DNASU" id="214779"/>
<dbReference type="Ensembl" id="ENSMUST00000049625.2">
    <property type="protein sequence ID" value="ENSMUSP00000061782.2"/>
    <property type="gene ID" value="ENSMUSG00000044296.11"/>
</dbReference>
<dbReference type="Ensembl" id="ENSMUST00000109134.8">
    <property type="protein sequence ID" value="ENSMUSP00000104762.2"/>
    <property type="gene ID" value="ENSMUSG00000044296.11"/>
</dbReference>
<dbReference type="GeneID" id="214779"/>
<dbReference type="KEGG" id="mmu:214779"/>
<dbReference type="UCSC" id="uc007isr.2">
    <property type="organism name" value="mouse"/>
</dbReference>
<dbReference type="AGR" id="MGI:3053099"/>
<dbReference type="CTD" id="214779"/>
<dbReference type="MGI" id="MGI:3053099">
    <property type="gene designation" value="Zfp879"/>
</dbReference>
<dbReference type="VEuPathDB" id="HostDB:ENSMUSG00000044296"/>
<dbReference type="eggNOG" id="KOG1721">
    <property type="taxonomic scope" value="Eukaryota"/>
</dbReference>
<dbReference type="GeneTree" id="ENSGT00940000162816"/>
<dbReference type="HOGENOM" id="CLU_002678_44_5_1"/>
<dbReference type="InParanoid" id="Q8BI99"/>
<dbReference type="OMA" id="TCLGWES"/>
<dbReference type="OrthoDB" id="40579at2759"/>
<dbReference type="PhylomeDB" id="Q8BI99"/>
<dbReference type="TreeFam" id="TF350823"/>
<dbReference type="BioGRID-ORCS" id="214779">
    <property type="hits" value="4 hits in 76 CRISPR screens"/>
</dbReference>
<dbReference type="PRO" id="PR:Q8BI99"/>
<dbReference type="Proteomes" id="UP000000589">
    <property type="component" value="Chromosome 11"/>
</dbReference>
<dbReference type="RNAct" id="Q8BI99">
    <property type="molecule type" value="protein"/>
</dbReference>
<dbReference type="Bgee" id="ENSMUSG00000044296">
    <property type="expression patterns" value="Expressed in upper arm mesenchyme and 60 other cell types or tissues"/>
</dbReference>
<dbReference type="ExpressionAtlas" id="Q8BI99">
    <property type="expression patterns" value="baseline and differential"/>
</dbReference>
<dbReference type="GO" id="GO:0005634">
    <property type="term" value="C:nucleus"/>
    <property type="evidence" value="ECO:0007669"/>
    <property type="project" value="UniProtKB-SubCell"/>
</dbReference>
<dbReference type="GO" id="GO:0003677">
    <property type="term" value="F:DNA binding"/>
    <property type="evidence" value="ECO:0007669"/>
    <property type="project" value="UniProtKB-KW"/>
</dbReference>
<dbReference type="GO" id="GO:0008270">
    <property type="term" value="F:zinc ion binding"/>
    <property type="evidence" value="ECO:0007669"/>
    <property type="project" value="UniProtKB-KW"/>
</dbReference>
<dbReference type="GO" id="GO:0006355">
    <property type="term" value="P:regulation of DNA-templated transcription"/>
    <property type="evidence" value="ECO:0007669"/>
    <property type="project" value="InterPro"/>
</dbReference>
<dbReference type="CDD" id="cd07765">
    <property type="entry name" value="KRAB_A-box"/>
    <property type="match status" value="1"/>
</dbReference>
<dbReference type="FunFam" id="3.30.160.60:FF:004137">
    <property type="match status" value="1"/>
</dbReference>
<dbReference type="FunFam" id="3.30.160.60:FF:000557">
    <property type="entry name" value="zinc finger and SCAN domain-containing protein 29"/>
    <property type="match status" value="2"/>
</dbReference>
<dbReference type="FunFam" id="3.30.160.60:FF:001530">
    <property type="entry name" value="Zinc finger protein 268"/>
    <property type="match status" value="1"/>
</dbReference>
<dbReference type="FunFam" id="3.30.160.60:FF:002259">
    <property type="entry name" value="zinc finger protein 271"/>
    <property type="match status" value="1"/>
</dbReference>
<dbReference type="FunFam" id="3.30.160.60:FF:002343">
    <property type="entry name" value="Zinc finger protein 33A"/>
    <property type="match status" value="3"/>
</dbReference>
<dbReference type="FunFam" id="3.30.160.60:FF:002402">
    <property type="entry name" value="Zinc finger protein 347"/>
    <property type="match status" value="1"/>
</dbReference>
<dbReference type="FunFam" id="3.30.160.60:FF:000044">
    <property type="entry name" value="zinc finger protein 37 homolog"/>
    <property type="match status" value="1"/>
</dbReference>
<dbReference type="FunFam" id="3.30.160.60:FF:000060">
    <property type="entry name" value="zinc finger protein 436"/>
    <property type="match status" value="1"/>
</dbReference>
<dbReference type="FunFam" id="3.30.160.60:FF:000902">
    <property type="entry name" value="Zinc finger protein 445"/>
    <property type="match status" value="1"/>
</dbReference>
<dbReference type="FunFam" id="3.30.160.60:FF:002090">
    <property type="entry name" value="Zinc finger protein 473"/>
    <property type="match status" value="1"/>
</dbReference>
<dbReference type="FunFam" id="3.30.160.60:FF:000416">
    <property type="entry name" value="zinc finger protein 879 isoform X1"/>
    <property type="match status" value="1"/>
</dbReference>
<dbReference type="Gene3D" id="6.10.140.140">
    <property type="match status" value="1"/>
</dbReference>
<dbReference type="Gene3D" id="3.30.160.60">
    <property type="entry name" value="Classic Zinc Finger"/>
    <property type="match status" value="13"/>
</dbReference>
<dbReference type="InterPro" id="IPR001909">
    <property type="entry name" value="KRAB"/>
</dbReference>
<dbReference type="InterPro" id="IPR036051">
    <property type="entry name" value="KRAB_dom_sf"/>
</dbReference>
<dbReference type="InterPro" id="IPR036236">
    <property type="entry name" value="Znf_C2H2_sf"/>
</dbReference>
<dbReference type="InterPro" id="IPR013087">
    <property type="entry name" value="Znf_C2H2_type"/>
</dbReference>
<dbReference type="PANTHER" id="PTHR14003">
    <property type="entry name" value="TRANSCRIPTIONAL REPRESSOR PROTEIN YY"/>
    <property type="match status" value="1"/>
</dbReference>
<dbReference type="PANTHER" id="PTHR14003:SF23">
    <property type="entry name" value="ZINC FINGER PROTEIN 143"/>
    <property type="match status" value="1"/>
</dbReference>
<dbReference type="Pfam" id="PF01352">
    <property type="entry name" value="KRAB"/>
    <property type="match status" value="1"/>
</dbReference>
<dbReference type="Pfam" id="PF00096">
    <property type="entry name" value="zf-C2H2"/>
    <property type="match status" value="11"/>
</dbReference>
<dbReference type="Pfam" id="PF13465">
    <property type="entry name" value="zf-H2C2_2"/>
    <property type="match status" value="1"/>
</dbReference>
<dbReference type="SMART" id="SM00349">
    <property type="entry name" value="KRAB"/>
    <property type="match status" value="1"/>
</dbReference>
<dbReference type="SMART" id="SM00355">
    <property type="entry name" value="ZnF_C2H2"/>
    <property type="match status" value="13"/>
</dbReference>
<dbReference type="SUPFAM" id="SSF57667">
    <property type="entry name" value="beta-beta-alpha zinc fingers"/>
    <property type="match status" value="7"/>
</dbReference>
<dbReference type="SUPFAM" id="SSF109640">
    <property type="entry name" value="KRAB domain (Kruppel-associated box)"/>
    <property type="match status" value="1"/>
</dbReference>
<dbReference type="PROSITE" id="PS50805">
    <property type="entry name" value="KRAB"/>
    <property type="match status" value="1"/>
</dbReference>
<dbReference type="PROSITE" id="PS00028">
    <property type="entry name" value="ZINC_FINGER_C2H2_1"/>
    <property type="match status" value="13"/>
</dbReference>
<dbReference type="PROSITE" id="PS50157">
    <property type="entry name" value="ZINC_FINGER_C2H2_2"/>
    <property type="match status" value="13"/>
</dbReference>
<accession>Q8BI99</accession>
<comment type="function">
    <text>May be involved in transcriptional regulation.</text>
</comment>
<comment type="subcellular location">
    <subcellularLocation>
        <location evidence="3">Nucleus</location>
    </subcellularLocation>
</comment>
<comment type="similarity">
    <text evidence="3">Belongs to the krueppel C2H2-type zinc-finger protein family.</text>
</comment>
<name>ZN879_MOUSE</name>
<feature type="chain" id="PRO_0000393968" description="Zinc finger protein 879">
    <location>
        <begin position="1"/>
        <end position="563"/>
    </location>
</feature>
<feature type="domain" description="KRAB" evidence="2">
    <location>
        <begin position="14"/>
        <end position="85"/>
    </location>
</feature>
<feature type="zinc finger region" description="C2H2-type 1" evidence="1">
    <location>
        <begin position="204"/>
        <end position="226"/>
    </location>
</feature>
<feature type="zinc finger region" description="C2H2-type 2" evidence="1">
    <location>
        <begin position="232"/>
        <end position="254"/>
    </location>
</feature>
<feature type="zinc finger region" description="C2H2-type 3" evidence="1">
    <location>
        <begin position="260"/>
        <end position="282"/>
    </location>
</feature>
<feature type="zinc finger region" description="C2H2-type 4" evidence="1">
    <location>
        <begin position="288"/>
        <end position="310"/>
    </location>
</feature>
<feature type="zinc finger region" description="C2H2-type 5" evidence="1">
    <location>
        <begin position="316"/>
        <end position="338"/>
    </location>
</feature>
<feature type="zinc finger region" description="C2H2-type 6" evidence="1">
    <location>
        <begin position="344"/>
        <end position="366"/>
    </location>
</feature>
<feature type="zinc finger region" description="C2H2-type 7" evidence="1">
    <location>
        <begin position="372"/>
        <end position="394"/>
    </location>
</feature>
<feature type="zinc finger region" description="C2H2-type 8" evidence="1">
    <location>
        <begin position="400"/>
        <end position="422"/>
    </location>
</feature>
<feature type="zinc finger region" description="C2H2-type 9" evidence="1">
    <location>
        <begin position="428"/>
        <end position="450"/>
    </location>
</feature>
<feature type="zinc finger region" description="C2H2-type 10" evidence="1">
    <location>
        <begin position="456"/>
        <end position="478"/>
    </location>
</feature>
<feature type="zinc finger region" description="C2H2-type 11" evidence="1">
    <location>
        <begin position="484"/>
        <end position="506"/>
    </location>
</feature>
<feature type="zinc finger region" description="C2H2-type 12" evidence="1">
    <location>
        <begin position="512"/>
        <end position="534"/>
    </location>
</feature>
<feature type="zinc finger region" description="C2H2-type 13" evidence="1">
    <location>
        <begin position="540"/>
        <end position="562"/>
    </location>
</feature>
<reference key="1">
    <citation type="journal article" date="2005" name="Science">
        <title>The transcriptional landscape of the mammalian genome.</title>
        <authorList>
            <person name="Carninci P."/>
            <person name="Kasukawa T."/>
            <person name="Katayama S."/>
            <person name="Gough J."/>
            <person name="Frith M.C."/>
            <person name="Maeda N."/>
            <person name="Oyama R."/>
            <person name="Ravasi T."/>
            <person name="Lenhard B."/>
            <person name="Wells C."/>
            <person name="Kodzius R."/>
            <person name="Shimokawa K."/>
            <person name="Bajic V.B."/>
            <person name="Brenner S.E."/>
            <person name="Batalov S."/>
            <person name="Forrest A.R."/>
            <person name="Zavolan M."/>
            <person name="Davis M.J."/>
            <person name="Wilming L.G."/>
            <person name="Aidinis V."/>
            <person name="Allen J.E."/>
            <person name="Ambesi-Impiombato A."/>
            <person name="Apweiler R."/>
            <person name="Aturaliya R.N."/>
            <person name="Bailey T.L."/>
            <person name="Bansal M."/>
            <person name="Baxter L."/>
            <person name="Beisel K.W."/>
            <person name="Bersano T."/>
            <person name="Bono H."/>
            <person name="Chalk A.M."/>
            <person name="Chiu K.P."/>
            <person name="Choudhary V."/>
            <person name="Christoffels A."/>
            <person name="Clutterbuck D.R."/>
            <person name="Crowe M.L."/>
            <person name="Dalla E."/>
            <person name="Dalrymple B.P."/>
            <person name="de Bono B."/>
            <person name="Della Gatta G."/>
            <person name="di Bernardo D."/>
            <person name="Down T."/>
            <person name="Engstrom P."/>
            <person name="Fagiolini M."/>
            <person name="Faulkner G."/>
            <person name="Fletcher C.F."/>
            <person name="Fukushima T."/>
            <person name="Furuno M."/>
            <person name="Futaki S."/>
            <person name="Gariboldi M."/>
            <person name="Georgii-Hemming P."/>
            <person name="Gingeras T.R."/>
            <person name="Gojobori T."/>
            <person name="Green R.E."/>
            <person name="Gustincich S."/>
            <person name="Harbers M."/>
            <person name="Hayashi Y."/>
            <person name="Hensch T.K."/>
            <person name="Hirokawa N."/>
            <person name="Hill D."/>
            <person name="Huminiecki L."/>
            <person name="Iacono M."/>
            <person name="Ikeo K."/>
            <person name="Iwama A."/>
            <person name="Ishikawa T."/>
            <person name="Jakt M."/>
            <person name="Kanapin A."/>
            <person name="Katoh M."/>
            <person name="Kawasawa Y."/>
            <person name="Kelso J."/>
            <person name="Kitamura H."/>
            <person name="Kitano H."/>
            <person name="Kollias G."/>
            <person name="Krishnan S.P."/>
            <person name="Kruger A."/>
            <person name="Kummerfeld S.K."/>
            <person name="Kurochkin I.V."/>
            <person name="Lareau L.F."/>
            <person name="Lazarevic D."/>
            <person name="Lipovich L."/>
            <person name="Liu J."/>
            <person name="Liuni S."/>
            <person name="McWilliam S."/>
            <person name="Madan Babu M."/>
            <person name="Madera M."/>
            <person name="Marchionni L."/>
            <person name="Matsuda H."/>
            <person name="Matsuzawa S."/>
            <person name="Miki H."/>
            <person name="Mignone F."/>
            <person name="Miyake S."/>
            <person name="Morris K."/>
            <person name="Mottagui-Tabar S."/>
            <person name="Mulder N."/>
            <person name="Nakano N."/>
            <person name="Nakauchi H."/>
            <person name="Ng P."/>
            <person name="Nilsson R."/>
            <person name="Nishiguchi S."/>
            <person name="Nishikawa S."/>
            <person name="Nori F."/>
            <person name="Ohara O."/>
            <person name="Okazaki Y."/>
            <person name="Orlando V."/>
            <person name="Pang K.C."/>
            <person name="Pavan W.J."/>
            <person name="Pavesi G."/>
            <person name="Pesole G."/>
            <person name="Petrovsky N."/>
            <person name="Piazza S."/>
            <person name="Reed J."/>
            <person name="Reid J.F."/>
            <person name="Ring B.Z."/>
            <person name="Ringwald M."/>
            <person name="Rost B."/>
            <person name="Ruan Y."/>
            <person name="Salzberg S.L."/>
            <person name="Sandelin A."/>
            <person name="Schneider C."/>
            <person name="Schoenbach C."/>
            <person name="Sekiguchi K."/>
            <person name="Semple C.A."/>
            <person name="Seno S."/>
            <person name="Sessa L."/>
            <person name="Sheng Y."/>
            <person name="Shibata Y."/>
            <person name="Shimada H."/>
            <person name="Shimada K."/>
            <person name="Silva D."/>
            <person name="Sinclair B."/>
            <person name="Sperling S."/>
            <person name="Stupka E."/>
            <person name="Sugiura K."/>
            <person name="Sultana R."/>
            <person name="Takenaka Y."/>
            <person name="Taki K."/>
            <person name="Tammoja K."/>
            <person name="Tan S.L."/>
            <person name="Tang S."/>
            <person name="Taylor M.S."/>
            <person name="Tegner J."/>
            <person name="Teichmann S.A."/>
            <person name="Ueda H.R."/>
            <person name="van Nimwegen E."/>
            <person name="Verardo R."/>
            <person name="Wei C.L."/>
            <person name="Yagi K."/>
            <person name="Yamanishi H."/>
            <person name="Zabarovsky E."/>
            <person name="Zhu S."/>
            <person name="Zimmer A."/>
            <person name="Hide W."/>
            <person name="Bult C."/>
            <person name="Grimmond S.M."/>
            <person name="Teasdale R.D."/>
            <person name="Liu E.T."/>
            <person name="Brusic V."/>
            <person name="Quackenbush J."/>
            <person name="Wahlestedt C."/>
            <person name="Mattick J.S."/>
            <person name="Hume D.A."/>
            <person name="Kai C."/>
            <person name="Sasaki D."/>
            <person name="Tomaru Y."/>
            <person name="Fukuda S."/>
            <person name="Kanamori-Katayama M."/>
            <person name="Suzuki M."/>
            <person name="Aoki J."/>
            <person name="Arakawa T."/>
            <person name="Iida J."/>
            <person name="Imamura K."/>
            <person name="Itoh M."/>
            <person name="Kato T."/>
            <person name="Kawaji H."/>
            <person name="Kawagashira N."/>
            <person name="Kawashima T."/>
            <person name="Kojima M."/>
            <person name="Kondo S."/>
            <person name="Konno H."/>
            <person name="Nakano K."/>
            <person name="Ninomiya N."/>
            <person name="Nishio T."/>
            <person name="Okada M."/>
            <person name="Plessy C."/>
            <person name="Shibata K."/>
            <person name="Shiraki T."/>
            <person name="Suzuki S."/>
            <person name="Tagami M."/>
            <person name="Waki K."/>
            <person name="Watahiki A."/>
            <person name="Okamura-Oho Y."/>
            <person name="Suzuki H."/>
            <person name="Kawai J."/>
            <person name="Hayashizaki Y."/>
        </authorList>
    </citation>
    <scope>NUCLEOTIDE SEQUENCE [LARGE SCALE MRNA]</scope>
    <source>
        <strain>C57BL/6J</strain>
        <tissue>Cerebellum</tissue>
    </source>
</reference>
<reference key="2">
    <citation type="journal article" date="2009" name="PLoS Biol.">
        <title>Lineage-specific biology revealed by a finished genome assembly of the mouse.</title>
        <authorList>
            <person name="Church D.M."/>
            <person name="Goodstadt L."/>
            <person name="Hillier L.W."/>
            <person name="Zody M.C."/>
            <person name="Goldstein S."/>
            <person name="She X."/>
            <person name="Bult C.J."/>
            <person name="Agarwala R."/>
            <person name="Cherry J.L."/>
            <person name="DiCuccio M."/>
            <person name="Hlavina W."/>
            <person name="Kapustin Y."/>
            <person name="Meric P."/>
            <person name="Maglott D."/>
            <person name="Birtle Z."/>
            <person name="Marques A.C."/>
            <person name="Graves T."/>
            <person name="Zhou S."/>
            <person name="Teague B."/>
            <person name="Potamousis K."/>
            <person name="Churas C."/>
            <person name="Place M."/>
            <person name="Herschleb J."/>
            <person name="Runnheim R."/>
            <person name="Forrest D."/>
            <person name="Amos-Landgraf J."/>
            <person name="Schwartz D.C."/>
            <person name="Cheng Z."/>
            <person name="Lindblad-Toh K."/>
            <person name="Eichler E.E."/>
            <person name="Ponting C.P."/>
        </authorList>
    </citation>
    <scope>NUCLEOTIDE SEQUENCE [LARGE SCALE GENOMIC DNA]</scope>
    <source>
        <strain>C57BL/6J</strain>
    </source>
</reference>
<reference key="3">
    <citation type="submission" date="2005-09" db="EMBL/GenBank/DDBJ databases">
        <authorList>
            <person name="Mural R.J."/>
            <person name="Adams M.D."/>
            <person name="Myers E.W."/>
            <person name="Smith H.O."/>
            <person name="Venter J.C."/>
        </authorList>
    </citation>
    <scope>NUCLEOTIDE SEQUENCE [LARGE SCALE GENOMIC DNA]</scope>
</reference>
<organism>
    <name type="scientific">Mus musculus</name>
    <name type="common">Mouse</name>
    <dbReference type="NCBI Taxonomy" id="10090"/>
    <lineage>
        <taxon>Eukaryota</taxon>
        <taxon>Metazoa</taxon>
        <taxon>Chordata</taxon>
        <taxon>Craniata</taxon>
        <taxon>Vertebrata</taxon>
        <taxon>Euteleostomi</taxon>
        <taxon>Mammalia</taxon>
        <taxon>Eutheria</taxon>
        <taxon>Euarchontoglires</taxon>
        <taxon>Glires</taxon>
        <taxon>Rodentia</taxon>
        <taxon>Myomorpha</taxon>
        <taxon>Muroidea</taxon>
        <taxon>Muridae</taxon>
        <taxon>Murinae</taxon>
        <taxon>Mus</taxon>
        <taxon>Mus</taxon>
    </lineage>
</organism>
<evidence type="ECO:0000255" key="1">
    <source>
        <dbReference type="PROSITE-ProRule" id="PRU00042"/>
    </source>
</evidence>
<evidence type="ECO:0000255" key="2">
    <source>
        <dbReference type="PROSITE-ProRule" id="PRU00119"/>
    </source>
</evidence>
<evidence type="ECO:0000305" key="3"/>